<organism>
    <name type="scientific">Conus imperialis</name>
    <name type="common">Imperial cone</name>
    <dbReference type="NCBI Taxonomy" id="35631"/>
    <lineage>
        <taxon>Eukaryota</taxon>
        <taxon>Metazoa</taxon>
        <taxon>Spiralia</taxon>
        <taxon>Lophotrochozoa</taxon>
        <taxon>Mollusca</taxon>
        <taxon>Gastropoda</taxon>
        <taxon>Caenogastropoda</taxon>
        <taxon>Neogastropoda</taxon>
        <taxon>Conoidea</taxon>
        <taxon>Conidae</taxon>
        <taxon>Conus</taxon>
        <taxon>Stephanoconus</taxon>
    </lineage>
</organism>
<reference key="1">
    <citation type="journal article" date="2005" name="Peptides">
        <title>Direct cDNA cloning of novel conopeptide precursors of the O-superfamily.</title>
        <authorList>
            <person name="Kauferstein S."/>
            <person name="Melaun C."/>
            <person name="Mebs D."/>
        </authorList>
    </citation>
    <scope>NUCLEOTIDE SEQUENCE [MRNA]</scope>
    <source>
        <tissue>Venom duct</tissue>
    </source>
</reference>
<protein>
    <recommendedName>
        <fullName>Omega-conotoxin-like 2/7</fullName>
    </recommendedName>
</protein>
<name>O162_CONIM</name>
<proteinExistence type="evidence at transcript level"/>
<accession>Q5K0B9</accession>
<sequence>MKLTCMMIVAVMFLTASIFITADNSRNGIENLPRMRRHEMKKPKASKLNKRVCIADDMPCGFGLFGGPLCCSGWCLFVCL</sequence>
<keyword id="KW-0108">Calcium channel impairing toxin</keyword>
<keyword id="KW-0165">Cleavage on pair of basic residues</keyword>
<keyword id="KW-1015">Disulfide bond</keyword>
<keyword id="KW-0872">Ion channel impairing toxin</keyword>
<keyword id="KW-0960">Knottin</keyword>
<keyword id="KW-0528">Neurotoxin</keyword>
<keyword id="KW-0638">Presynaptic neurotoxin</keyword>
<keyword id="KW-0964">Secreted</keyword>
<keyword id="KW-0732">Signal</keyword>
<keyword id="KW-0800">Toxin</keyword>
<keyword id="KW-1218">Voltage-gated calcium channel impairing toxin</keyword>
<evidence type="ECO:0000250" key="1"/>
<evidence type="ECO:0000255" key="2"/>
<evidence type="ECO:0000305" key="3"/>
<dbReference type="EMBL" id="AJ851185">
    <property type="protein sequence ID" value="CAH64858.1"/>
    <property type="molecule type" value="mRNA"/>
</dbReference>
<dbReference type="EMBL" id="AJ851189">
    <property type="protein sequence ID" value="CAH64862.1"/>
    <property type="molecule type" value="mRNA"/>
</dbReference>
<dbReference type="SMR" id="Q5K0B9"/>
<dbReference type="ConoServer" id="1074">
    <property type="toxin name" value="Conotoxin-2/7 precursor"/>
</dbReference>
<dbReference type="GO" id="GO:0005576">
    <property type="term" value="C:extracellular region"/>
    <property type="evidence" value="ECO:0007669"/>
    <property type="project" value="UniProtKB-SubCell"/>
</dbReference>
<dbReference type="GO" id="GO:0044231">
    <property type="term" value="C:host cell presynaptic membrane"/>
    <property type="evidence" value="ECO:0007669"/>
    <property type="project" value="UniProtKB-KW"/>
</dbReference>
<dbReference type="GO" id="GO:0005246">
    <property type="term" value="F:calcium channel regulator activity"/>
    <property type="evidence" value="ECO:0007669"/>
    <property type="project" value="UniProtKB-KW"/>
</dbReference>
<dbReference type="GO" id="GO:0008200">
    <property type="term" value="F:ion channel inhibitor activity"/>
    <property type="evidence" value="ECO:0007669"/>
    <property type="project" value="InterPro"/>
</dbReference>
<dbReference type="GO" id="GO:0090729">
    <property type="term" value="F:toxin activity"/>
    <property type="evidence" value="ECO:0007669"/>
    <property type="project" value="UniProtKB-KW"/>
</dbReference>
<dbReference type="InterPro" id="IPR004214">
    <property type="entry name" value="Conotoxin"/>
</dbReference>
<dbReference type="InterPro" id="IPR012321">
    <property type="entry name" value="Conotoxin_omega-typ_CS"/>
</dbReference>
<dbReference type="Pfam" id="PF02950">
    <property type="entry name" value="Conotoxin"/>
    <property type="match status" value="1"/>
</dbReference>
<dbReference type="SUPFAM" id="SSF57059">
    <property type="entry name" value="omega toxin-like"/>
    <property type="match status" value="1"/>
</dbReference>
<dbReference type="PROSITE" id="PS60004">
    <property type="entry name" value="OMEGA_CONOTOXIN"/>
    <property type="match status" value="1"/>
</dbReference>
<feature type="signal peptide" evidence="2">
    <location>
        <begin position="1"/>
        <end position="22"/>
    </location>
</feature>
<feature type="propeptide" id="PRO_0000034910" evidence="1">
    <location>
        <begin position="23"/>
        <end position="51"/>
    </location>
</feature>
<feature type="peptide" id="PRO_0000034911" description="Omega-conotoxin-like 2/7">
    <location>
        <begin position="52"/>
        <end position="80"/>
    </location>
</feature>
<feature type="disulfide bond" evidence="1">
    <location>
        <begin position="53"/>
        <end position="71"/>
    </location>
</feature>
<feature type="disulfide bond" evidence="1">
    <location>
        <begin position="60"/>
        <end position="75"/>
    </location>
</feature>
<feature type="disulfide bond" evidence="1">
    <location>
        <begin position="70"/>
        <end position="79"/>
    </location>
</feature>
<comment type="function">
    <text evidence="1">Omega-conotoxins act at presynaptic membranes, they bind and block voltage-gated calcium channels (Cav).</text>
</comment>
<comment type="subcellular location">
    <subcellularLocation>
        <location evidence="1">Secreted</location>
    </subcellularLocation>
</comment>
<comment type="tissue specificity">
    <text>Expressed by the venom duct.</text>
</comment>
<comment type="domain">
    <text evidence="1">The presence of a 'disulfide through disulfide knot' structurally defines this protein as a knottin.</text>
</comment>
<comment type="domain">
    <text>The cysteine framework is VI/VII (C-C-CC-C-C).</text>
</comment>
<comment type="similarity">
    <text evidence="3">Belongs to the conotoxin O1 superfamily.</text>
</comment>